<dbReference type="EMBL" id="AAFI02000019">
    <property type="protein sequence ID" value="EAL68872.1"/>
    <property type="molecule type" value="Genomic_DNA"/>
</dbReference>
<dbReference type="RefSeq" id="XP_642788.1">
    <property type="nucleotide sequence ID" value="XM_637696.1"/>
</dbReference>
<dbReference type="SMR" id="Q54ZS8"/>
<dbReference type="FunCoup" id="Q54ZS8">
    <property type="interactions" value="508"/>
</dbReference>
<dbReference type="STRING" id="44689.Q54ZS8"/>
<dbReference type="PaxDb" id="44689-DDB0233678"/>
<dbReference type="EnsemblProtists" id="EAL68872">
    <property type="protein sequence ID" value="EAL68872"/>
    <property type="gene ID" value="DDB_G0277371"/>
</dbReference>
<dbReference type="GeneID" id="8620981"/>
<dbReference type="KEGG" id="ddi:DDB_G0277371"/>
<dbReference type="dictyBase" id="DDB_G0277371">
    <property type="gene designation" value="pabpn1"/>
</dbReference>
<dbReference type="VEuPathDB" id="AmoebaDB:DDB_G0277371"/>
<dbReference type="eggNOG" id="KOG4209">
    <property type="taxonomic scope" value="Eukaryota"/>
</dbReference>
<dbReference type="HOGENOM" id="CLU_012062_23_3_1"/>
<dbReference type="InParanoid" id="Q54ZS8"/>
<dbReference type="OMA" id="YRGRATY"/>
<dbReference type="PRO" id="PR:Q54ZS8"/>
<dbReference type="Proteomes" id="UP000002195">
    <property type="component" value="Chromosome 2"/>
</dbReference>
<dbReference type="GO" id="GO:0005737">
    <property type="term" value="C:cytoplasm"/>
    <property type="evidence" value="ECO:0000250"/>
    <property type="project" value="UniProtKB"/>
</dbReference>
<dbReference type="GO" id="GO:0005634">
    <property type="term" value="C:nucleus"/>
    <property type="evidence" value="ECO:0007669"/>
    <property type="project" value="UniProtKB-SubCell"/>
</dbReference>
<dbReference type="GO" id="GO:0008143">
    <property type="term" value="F:poly(A) binding"/>
    <property type="evidence" value="ECO:0000250"/>
    <property type="project" value="UniProtKB"/>
</dbReference>
<dbReference type="GO" id="GO:0003723">
    <property type="term" value="F:RNA binding"/>
    <property type="evidence" value="ECO:0000250"/>
    <property type="project" value="UniProtKB"/>
</dbReference>
<dbReference type="GO" id="GO:0031124">
    <property type="term" value="P:mRNA 3'-end processing"/>
    <property type="evidence" value="ECO:0000250"/>
    <property type="project" value="UniProtKB"/>
</dbReference>
<dbReference type="CDD" id="cd12306">
    <property type="entry name" value="RRM_II_PABPs"/>
    <property type="match status" value="1"/>
</dbReference>
<dbReference type="Gene3D" id="3.30.70.330">
    <property type="match status" value="1"/>
</dbReference>
<dbReference type="InterPro" id="IPR012677">
    <property type="entry name" value="Nucleotide-bd_a/b_plait_sf"/>
</dbReference>
<dbReference type="InterPro" id="IPR035979">
    <property type="entry name" value="RBD_domain_sf"/>
</dbReference>
<dbReference type="InterPro" id="IPR000504">
    <property type="entry name" value="RRM_dom"/>
</dbReference>
<dbReference type="PANTHER" id="PTHR23236:SF12">
    <property type="entry name" value="EUKARYOTIC INITIATION FACTOR 4B-RELATED"/>
    <property type="match status" value="1"/>
</dbReference>
<dbReference type="PANTHER" id="PTHR23236">
    <property type="entry name" value="EUKARYOTIC TRANSLATION INITIATION FACTOR 4B/4H"/>
    <property type="match status" value="1"/>
</dbReference>
<dbReference type="Pfam" id="PF00076">
    <property type="entry name" value="RRM_1"/>
    <property type="match status" value="1"/>
</dbReference>
<dbReference type="SMART" id="SM00360">
    <property type="entry name" value="RRM"/>
    <property type="match status" value="1"/>
</dbReference>
<dbReference type="SUPFAM" id="SSF54928">
    <property type="entry name" value="RNA-binding domain, RBD"/>
    <property type="match status" value="1"/>
</dbReference>
<dbReference type="PROSITE" id="PS50102">
    <property type="entry name" value="RRM"/>
    <property type="match status" value="1"/>
</dbReference>
<keyword id="KW-0507">mRNA processing</keyword>
<keyword id="KW-0539">Nucleus</keyword>
<keyword id="KW-1185">Reference proteome</keyword>
<keyword id="KW-0694">RNA-binding</keyword>
<reference key="1">
    <citation type="journal article" date="2002" name="Nature">
        <title>Sequence and analysis of chromosome 2 of Dictyostelium discoideum.</title>
        <authorList>
            <person name="Gloeckner G."/>
            <person name="Eichinger L."/>
            <person name="Szafranski K."/>
            <person name="Pachebat J.A."/>
            <person name="Bankier A.T."/>
            <person name="Dear P.H."/>
            <person name="Lehmann R."/>
            <person name="Baumgart C."/>
            <person name="Parra G."/>
            <person name="Abril J.F."/>
            <person name="Guigo R."/>
            <person name="Kumpf K."/>
            <person name="Tunggal B."/>
            <person name="Cox E.C."/>
            <person name="Quail M.A."/>
            <person name="Platzer M."/>
            <person name="Rosenthal A."/>
            <person name="Noegel A.A."/>
        </authorList>
    </citation>
    <scope>NUCLEOTIDE SEQUENCE [LARGE SCALE GENOMIC DNA]</scope>
    <source>
        <strain>AX4</strain>
    </source>
</reference>
<reference key="2">
    <citation type="journal article" date="2005" name="Nature">
        <title>The genome of the social amoeba Dictyostelium discoideum.</title>
        <authorList>
            <person name="Eichinger L."/>
            <person name="Pachebat J.A."/>
            <person name="Gloeckner G."/>
            <person name="Rajandream M.A."/>
            <person name="Sucgang R."/>
            <person name="Berriman M."/>
            <person name="Song J."/>
            <person name="Olsen R."/>
            <person name="Szafranski K."/>
            <person name="Xu Q."/>
            <person name="Tunggal B."/>
            <person name="Kummerfeld S."/>
            <person name="Madera M."/>
            <person name="Konfortov B.A."/>
            <person name="Rivero F."/>
            <person name="Bankier A.T."/>
            <person name="Lehmann R."/>
            <person name="Hamlin N."/>
            <person name="Davies R."/>
            <person name="Gaudet P."/>
            <person name="Fey P."/>
            <person name="Pilcher K."/>
            <person name="Chen G."/>
            <person name="Saunders D."/>
            <person name="Sodergren E.J."/>
            <person name="Davis P."/>
            <person name="Kerhornou A."/>
            <person name="Nie X."/>
            <person name="Hall N."/>
            <person name="Anjard C."/>
            <person name="Hemphill L."/>
            <person name="Bason N."/>
            <person name="Farbrother P."/>
            <person name="Desany B."/>
            <person name="Just E."/>
            <person name="Morio T."/>
            <person name="Rost R."/>
            <person name="Churcher C.M."/>
            <person name="Cooper J."/>
            <person name="Haydock S."/>
            <person name="van Driessche N."/>
            <person name="Cronin A."/>
            <person name="Goodhead I."/>
            <person name="Muzny D.M."/>
            <person name="Mourier T."/>
            <person name="Pain A."/>
            <person name="Lu M."/>
            <person name="Harper D."/>
            <person name="Lindsay R."/>
            <person name="Hauser H."/>
            <person name="James K.D."/>
            <person name="Quiles M."/>
            <person name="Madan Babu M."/>
            <person name="Saito T."/>
            <person name="Buchrieser C."/>
            <person name="Wardroper A."/>
            <person name="Felder M."/>
            <person name="Thangavelu M."/>
            <person name="Johnson D."/>
            <person name="Knights A."/>
            <person name="Loulseged H."/>
            <person name="Mungall K.L."/>
            <person name="Oliver K."/>
            <person name="Price C."/>
            <person name="Quail M.A."/>
            <person name="Urushihara H."/>
            <person name="Hernandez J."/>
            <person name="Rabbinowitsch E."/>
            <person name="Steffen D."/>
            <person name="Sanders M."/>
            <person name="Ma J."/>
            <person name="Kohara Y."/>
            <person name="Sharp S."/>
            <person name="Simmonds M.N."/>
            <person name="Spiegler S."/>
            <person name="Tivey A."/>
            <person name="Sugano S."/>
            <person name="White B."/>
            <person name="Walker D."/>
            <person name="Woodward J.R."/>
            <person name="Winckler T."/>
            <person name="Tanaka Y."/>
            <person name="Shaulsky G."/>
            <person name="Schleicher M."/>
            <person name="Weinstock G.M."/>
            <person name="Rosenthal A."/>
            <person name="Cox E.C."/>
            <person name="Chisholm R.L."/>
            <person name="Gibbs R.A."/>
            <person name="Loomis W.F."/>
            <person name="Platzer M."/>
            <person name="Kay R.R."/>
            <person name="Williams J.G."/>
            <person name="Dear P.H."/>
            <person name="Noegel A.A."/>
            <person name="Barrell B.G."/>
            <person name="Kuspa A."/>
        </authorList>
    </citation>
    <scope>NUCLEOTIDE SEQUENCE [LARGE SCALE GENOMIC DNA]</scope>
    <source>
        <strain>AX4</strain>
    </source>
</reference>
<comment type="function">
    <text evidence="1">Involved in the 3'-end formation of mRNA precursors (pre-mRNA) by the addition of a poly(A) tail of 200-250 nt to the upstream cleavage product.</text>
</comment>
<comment type="subcellular location">
    <subcellularLocation>
        <location evidence="1">Nucleus</location>
    </subcellularLocation>
</comment>
<protein>
    <recommendedName>
        <fullName>Polyadenylate-binding protein 2</fullName>
        <shortName>PABP-2</shortName>
        <shortName>Poly(A)-binding protein 2</shortName>
    </recommendedName>
    <alternativeName>
        <fullName>Poly(A)-binding protein II</fullName>
        <shortName>PABII</shortName>
    </alternativeName>
</protein>
<organism>
    <name type="scientific">Dictyostelium discoideum</name>
    <name type="common">Social amoeba</name>
    <dbReference type="NCBI Taxonomy" id="44689"/>
    <lineage>
        <taxon>Eukaryota</taxon>
        <taxon>Amoebozoa</taxon>
        <taxon>Evosea</taxon>
        <taxon>Eumycetozoa</taxon>
        <taxon>Dictyostelia</taxon>
        <taxon>Dictyosteliales</taxon>
        <taxon>Dictyosteliaceae</taxon>
        <taxon>Dictyostelium</taxon>
    </lineage>
</organism>
<accession>Q54ZS8</accession>
<accession>Q76P06</accession>
<sequence>MTDNNNGEIVEDKDNEKLKGEDNINNHISNHNNTEETSFEDPELEEMKKRFREMEEEAKKLTELQNNLESNITGNNGVGIGGNIGGGGGLMNTDQEEIDSRSVYVGNVDYKSTHDQILAYFQSCGTVNRITILSDKTTGHPKGCCYVEFVNKESIINAMALNDSFFNERQLKITPKRTNLPYYMRQGVLPPGRGGFRGGRGRGGIRGGIRGGRGRGNFYQPY</sequence>
<gene>
    <name type="primary">pabpn1</name>
    <name type="synonym">pab2</name>
    <name type="ORF">DDB_G0277371</name>
</gene>
<evidence type="ECO:0000250" key="1"/>
<evidence type="ECO:0000255" key="2">
    <source>
        <dbReference type="PROSITE-ProRule" id="PRU00176"/>
    </source>
</evidence>
<evidence type="ECO:0000256" key="3">
    <source>
        <dbReference type="SAM" id="MobiDB-lite"/>
    </source>
</evidence>
<feature type="chain" id="PRO_0000328295" description="Polyadenylate-binding protein 2">
    <location>
        <begin position="1"/>
        <end position="222"/>
    </location>
</feature>
<feature type="domain" description="RRM" evidence="2">
    <location>
        <begin position="101"/>
        <end position="178"/>
    </location>
</feature>
<feature type="region of interest" description="Disordered" evidence="3">
    <location>
        <begin position="1"/>
        <end position="43"/>
    </location>
</feature>
<feature type="compositionally biased region" description="Basic and acidic residues" evidence="3">
    <location>
        <begin position="10"/>
        <end position="24"/>
    </location>
</feature>
<name>PABP2_DICDI</name>
<proteinExistence type="inferred from homology"/>